<reference key="1">
    <citation type="journal article" date="2003" name="Nature">
        <title>The genome sequence of Bacillus anthracis Ames and comparison to closely related bacteria.</title>
        <authorList>
            <person name="Read T.D."/>
            <person name="Peterson S.N."/>
            <person name="Tourasse N.J."/>
            <person name="Baillie L.W."/>
            <person name="Paulsen I.T."/>
            <person name="Nelson K.E."/>
            <person name="Tettelin H."/>
            <person name="Fouts D.E."/>
            <person name="Eisen J.A."/>
            <person name="Gill S.R."/>
            <person name="Holtzapple E.K."/>
            <person name="Okstad O.A."/>
            <person name="Helgason E."/>
            <person name="Rilstone J."/>
            <person name="Wu M."/>
            <person name="Kolonay J.F."/>
            <person name="Beanan M.J."/>
            <person name="Dodson R.J."/>
            <person name="Brinkac L.M."/>
            <person name="Gwinn M.L."/>
            <person name="DeBoy R.T."/>
            <person name="Madpu R."/>
            <person name="Daugherty S.C."/>
            <person name="Durkin A.S."/>
            <person name="Haft D.H."/>
            <person name="Nelson W.C."/>
            <person name="Peterson J.D."/>
            <person name="Pop M."/>
            <person name="Khouri H.M."/>
            <person name="Radune D."/>
            <person name="Benton J.L."/>
            <person name="Mahamoud Y."/>
            <person name="Jiang L."/>
            <person name="Hance I.R."/>
            <person name="Weidman J.F."/>
            <person name="Berry K.J."/>
            <person name="Plaut R.D."/>
            <person name="Wolf A.M."/>
            <person name="Watkins K.L."/>
            <person name="Nierman W.C."/>
            <person name="Hazen A."/>
            <person name="Cline R.T."/>
            <person name="Redmond C."/>
            <person name="Thwaite J.E."/>
            <person name="White O."/>
            <person name="Salzberg S.L."/>
            <person name="Thomason B."/>
            <person name="Friedlander A.M."/>
            <person name="Koehler T.M."/>
            <person name="Hanna P.C."/>
            <person name="Kolstoe A.-B."/>
            <person name="Fraser C.M."/>
        </authorList>
    </citation>
    <scope>NUCLEOTIDE SEQUENCE [LARGE SCALE GENOMIC DNA]</scope>
    <source>
        <strain>Ames / isolate Porton</strain>
    </source>
</reference>
<reference key="2">
    <citation type="journal article" date="2009" name="J. Bacteriol.">
        <title>The complete genome sequence of Bacillus anthracis Ames 'Ancestor'.</title>
        <authorList>
            <person name="Ravel J."/>
            <person name="Jiang L."/>
            <person name="Stanley S.T."/>
            <person name="Wilson M.R."/>
            <person name="Decker R.S."/>
            <person name="Read T.D."/>
            <person name="Worsham P."/>
            <person name="Keim P.S."/>
            <person name="Salzberg S.L."/>
            <person name="Fraser-Liggett C.M."/>
            <person name="Rasko D.A."/>
        </authorList>
    </citation>
    <scope>NUCLEOTIDE SEQUENCE [LARGE SCALE GENOMIC DNA]</scope>
    <source>
        <strain>Ames ancestor</strain>
    </source>
</reference>
<reference key="3">
    <citation type="submission" date="2004-01" db="EMBL/GenBank/DDBJ databases">
        <title>Complete genome sequence of Bacillus anthracis Sterne.</title>
        <authorList>
            <person name="Brettin T.S."/>
            <person name="Bruce D."/>
            <person name="Challacombe J.F."/>
            <person name="Gilna P."/>
            <person name="Han C."/>
            <person name="Hill K."/>
            <person name="Hitchcock P."/>
            <person name="Jackson P."/>
            <person name="Keim P."/>
            <person name="Longmire J."/>
            <person name="Lucas S."/>
            <person name="Okinaka R."/>
            <person name="Richardson P."/>
            <person name="Rubin E."/>
            <person name="Tice H."/>
        </authorList>
    </citation>
    <scope>NUCLEOTIDE SEQUENCE [LARGE SCALE GENOMIC DNA]</scope>
    <source>
        <strain>Sterne</strain>
    </source>
</reference>
<accession>Q6I4E9</accession>
<accession>Q6KY50</accession>
<accession>Q81VE7</accession>
<keyword id="KW-0012">Acyltransferase</keyword>
<keyword id="KW-0963">Cytoplasm</keyword>
<keyword id="KW-0408">Iron</keyword>
<keyword id="KW-0479">Metal-binding</keyword>
<keyword id="KW-1185">Reference proteome</keyword>
<keyword id="KW-0808">Transferase</keyword>
<keyword id="KW-0819">tRNA processing</keyword>
<protein>
    <recommendedName>
        <fullName evidence="1">tRNA N6-adenosine threonylcarbamoyltransferase</fullName>
        <ecNumber evidence="1">2.3.1.234</ecNumber>
    </recommendedName>
    <alternativeName>
        <fullName evidence="1">N6-L-threonylcarbamoyladenine synthase</fullName>
        <shortName evidence="1">t(6)A synthase</shortName>
    </alternativeName>
    <alternativeName>
        <fullName evidence="1">t(6)A37 threonylcarbamoyladenosine biosynthesis protein TsaD</fullName>
    </alternativeName>
    <alternativeName>
        <fullName evidence="1">tRNA threonylcarbamoyladenosine biosynthesis protein TsaD</fullName>
    </alternativeName>
</protein>
<organism>
    <name type="scientific">Bacillus anthracis</name>
    <dbReference type="NCBI Taxonomy" id="1392"/>
    <lineage>
        <taxon>Bacteria</taxon>
        <taxon>Bacillati</taxon>
        <taxon>Bacillota</taxon>
        <taxon>Bacilli</taxon>
        <taxon>Bacillales</taxon>
        <taxon>Bacillaceae</taxon>
        <taxon>Bacillus</taxon>
        <taxon>Bacillus cereus group</taxon>
    </lineage>
</organism>
<evidence type="ECO:0000255" key="1">
    <source>
        <dbReference type="HAMAP-Rule" id="MF_01445"/>
    </source>
</evidence>
<evidence type="ECO:0000305" key="2"/>
<name>TSAD_BACAN</name>
<dbReference type="EC" id="2.3.1.234" evidence="1"/>
<dbReference type="EMBL" id="AE016879">
    <property type="protein sequence ID" value="AAP24300.1"/>
    <property type="status" value="ALT_INIT"/>
    <property type="molecule type" value="Genomic_DNA"/>
</dbReference>
<dbReference type="EMBL" id="AE017334">
    <property type="protein sequence ID" value="AAT29344.1"/>
    <property type="status" value="ALT_INIT"/>
    <property type="molecule type" value="Genomic_DNA"/>
</dbReference>
<dbReference type="EMBL" id="AE017225">
    <property type="protein sequence ID" value="AAT52582.1"/>
    <property type="molecule type" value="Genomic_DNA"/>
</dbReference>
<dbReference type="RefSeq" id="NP_842814.1">
    <property type="nucleotide sequence ID" value="NC_003997.3"/>
</dbReference>
<dbReference type="SMR" id="Q6I4E9"/>
<dbReference type="STRING" id="261594.GBAA_0261"/>
<dbReference type="DNASU" id="1084587"/>
<dbReference type="KEGG" id="ban:BA_0261"/>
<dbReference type="KEGG" id="bar:GBAA_0261"/>
<dbReference type="KEGG" id="bat:BAS0247"/>
<dbReference type="PATRIC" id="fig|198094.11.peg.254"/>
<dbReference type="eggNOG" id="COG0533">
    <property type="taxonomic scope" value="Bacteria"/>
</dbReference>
<dbReference type="HOGENOM" id="CLU_023208_0_2_9"/>
<dbReference type="OMA" id="NAAMIGC"/>
<dbReference type="Proteomes" id="UP000000427">
    <property type="component" value="Chromosome"/>
</dbReference>
<dbReference type="Proteomes" id="UP000000594">
    <property type="component" value="Chromosome"/>
</dbReference>
<dbReference type="GO" id="GO:0005737">
    <property type="term" value="C:cytoplasm"/>
    <property type="evidence" value="ECO:0007669"/>
    <property type="project" value="UniProtKB-SubCell"/>
</dbReference>
<dbReference type="GO" id="GO:0005506">
    <property type="term" value="F:iron ion binding"/>
    <property type="evidence" value="ECO:0007669"/>
    <property type="project" value="UniProtKB-UniRule"/>
</dbReference>
<dbReference type="GO" id="GO:0061711">
    <property type="term" value="F:N(6)-L-threonylcarbamoyladenine synthase activity"/>
    <property type="evidence" value="ECO:0007669"/>
    <property type="project" value="UniProtKB-EC"/>
</dbReference>
<dbReference type="GO" id="GO:0002949">
    <property type="term" value="P:tRNA threonylcarbamoyladenosine modification"/>
    <property type="evidence" value="ECO:0007669"/>
    <property type="project" value="UniProtKB-UniRule"/>
</dbReference>
<dbReference type="CDD" id="cd24133">
    <property type="entry name" value="ASKHA_NBD_TsaD_bac"/>
    <property type="match status" value="1"/>
</dbReference>
<dbReference type="FunFam" id="3.30.420.40:FF:000012">
    <property type="entry name" value="tRNA N6-adenosine threonylcarbamoyltransferase"/>
    <property type="match status" value="1"/>
</dbReference>
<dbReference type="FunFam" id="3.30.420.40:FF:000040">
    <property type="entry name" value="tRNA N6-adenosine threonylcarbamoyltransferase"/>
    <property type="match status" value="1"/>
</dbReference>
<dbReference type="Gene3D" id="3.30.420.40">
    <property type="match status" value="2"/>
</dbReference>
<dbReference type="HAMAP" id="MF_01445">
    <property type="entry name" value="TsaD"/>
    <property type="match status" value="1"/>
</dbReference>
<dbReference type="InterPro" id="IPR043129">
    <property type="entry name" value="ATPase_NBD"/>
</dbReference>
<dbReference type="InterPro" id="IPR000905">
    <property type="entry name" value="Gcp-like_dom"/>
</dbReference>
<dbReference type="InterPro" id="IPR017861">
    <property type="entry name" value="KAE1/TsaD"/>
</dbReference>
<dbReference type="InterPro" id="IPR017860">
    <property type="entry name" value="Peptidase_M22_CS"/>
</dbReference>
<dbReference type="InterPro" id="IPR022450">
    <property type="entry name" value="TsaD"/>
</dbReference>
<dbReference type="NCBIfam" id="TIGR00329">
    <property type="entry name" value="gcp_kae1"/>
    <property type="match status" value="1"/>
</dbReference>
<dbReference type="NCBIfam" id="TIGR03723">
    <property type="entry name" value="T6A_TsaD_YgjD"/>
    <property type="match status" value="1"/>
</dbReference>
<dbReference type="PANTHER" id="PTHR11735">
    <property type="entry name" value="TRNA N6-ADENOSINE THREONYLCARBAMOYLTRANSFERASE"/>
    <property type="match status" value="1"/>
</dbReference>
<dbReference type="PANTHER" id="PTHR11735:SF6">
    <property type="entry name" value="TRNA N6-ADENOSINE THREONYLCARBAMOYLTRANSFERASE, MITOCHONDRIAL"/>
    <property type="match status" value="1"/>
</dbReference>
<dbReference type="Pfam" id="PF00814">
    <property type="entry name" value="TsaD"/>
    <property type="match status" value="1"/>
</dbReference>
<dbReference type="PRINTS" id="PR00789">
    <property type="entry name" value="OSIALOPTASE"/>
</dbReference>
<dbReference type="SUPFAM" id="SSF53067">
    <property type="entry name" value="Actin-like ATPase domain"/>
    <property type="match status" value="2"/>
</dbReference>
<dbReference type="PROSITE" id="PS01016">
    <property type="entry name" value="GLYCOPROTEASE"/>
    <property type="match status" value="1"/>
</dbReference>
<proteinExistence type="inferred from homology"/>
<gene>
    <name evidence="1" type="primary">tsaD</name>
    <name type="synonym">gcp</name>
    <name type="ordered locus">BA_0261</name>
    <name type="ordered locus">GBAA_0261</name>
    <name type="ordered locus">BAS0247</name>
</gene>
<comment type="function">
    <text evidence="1">Required for the formation of a threonylcarbamoyl group on adenosine at position 37 (t(6)A37) in tRNAs that read codons beginning with adenine. Is involved in the transfer of the threonylcarbamoyl moiety of threonylcarbamoyl-AMP (TC-AMP) to the N6 group of A37, together with TsaE and TsaB. TsaD likely plays a direct catalytic role in this reaction.</text>
</comment>
<comment type="catalytic activity">
    <reaction evidence="1">
        <text>L-threonylcarbamoyladenylate + adenosine(37) in tRNA = N(6)-L-threonylcarbamoyladenosine(37) in tRNA + AMP + H(+)</text>
        <dbReference type="Rhea" id="RHEA:37059"/>
        <dbReference type="Rhea" id="RHEA-COMP:10162"/>
        <dbReference type="Rhea" id="RHEA-COMP:10163"/>
        <dbReference type="ChEBI" id="CHEBI:15378"/>
        <dbReference type="ChEBI" id="CHEBI:73682"/>
        <dbReference type="ChEBI" id="CHEBI:74411"/>
        <dbReference type="ChEBI" id="CHEBI:74418"/>
        <dbReference type="ChEBI" id="CHEBI:456215"/>
        <dbReference type="EC" id="2.3.1.234"/>
    </reaction>
</comment>
<comment type="cofactor">
    <cofactor evidence="1">
        <name>Fe(2+)</name>
        <dbReference type="ChEBI" id="CHEBI:29033"/>
    </cofactor>
    <text evidence="1">Binds 1 Fe(2+) ion per subunit.</text>
</comment>
<comment type="subcellular location">
    <subcellularLocation>
        <location evidence="1">Cytoplasm</location>
    </subcellularLocation>
</comment>
<comment type="similarity">
    <text evidence="1">Belongs to the KAE1 / TsaD family.</text>
</comment>
<comment type="sequence caution" evidence="2">
    <conflict type="erroneous initiation">
        <sequence resource="EMBL-CDS" id="AAP24300"/>
    </conflict>
</comment>
<comment type="sequence caution" evidence="2">
    <conflict type="erroneous initiation">
        <sequence resource="EMBL-CDS" id="AAT29344"/>
    </conflict>
</comment>
<feature type="chain" id="PRO_0000303262" description="tRNA N6-adenosine threonylcarbamoyltransferase">
    <location>
        <begin position="1"/>
        <end position="343"/>
    </location>
</feature>
<feature type="binding site" evidence="1">
    <location>
        <position position="120"/>
    </location>
    <ligand>
        <name>Fe cation</name>
        <dbReference type="ChEBI" id="CHEBI:24875"/>
    </ligand>
</feature>
<feature type="binding site" evidence="1">
    <location>
        <position position="124"/>
    </location>
    <ligand>
        <name>Fe cation</name>
        <dbReference type="ChEBI" id="CHEBI:24875"/>
    </ligand>
</feature>
<feature type="binding site" evidence="1">
    <location>
        <begin position="142"/>
        <end position="146"/>
    </location>
    <ligand>
        <name>substrate</name>
    </ligand>
</feature>
<feature type="binding site" evidence="1">
    <location>
        <position position="175"/>
    </location>
    <ligand>
        <name>substrate</name>
    </ligand>
</feature>
<feature type="binding site" evidence="1">
    <location>
        <position position="188"/>
    </location>
    <ligand>
        <name>substrate</name>
    </ligand>
</feature>
<feature type="binding site" evidence="1">
    <location>
        <position position="192"/>
    </location>
    <ligand>
        <name>substrate</name>
    </ligand>
</feature>
<feature type="binding site" evidence="1">
    <location>
        <position position="281"/>
    </location>
    <ligand>
        <name>substrate</name>
    </ligand>
</feature>
<feature type="binding site" evidence="1">
    <location>
        <position position="310"/>
    </location>
    <ligand>
        <name>Fe cation</name>
        <dbReference type="ChEBI" id="CHEBI:24875"/>
    </ligand>
</feature>
<sequence>MGEYIMEKNTIILGIETSCDETAVAVVKNGTEIIANVVASQIESHKRFGGVVPEIASRHHVEEITVVLEEALKEANITFDDIDAIAVTEGPGLVGALLIGVNAAKAVAFAHDIPLVGVHHIAGHIYANRLVKEVQFPLLSLVVSGGHTELVYMKEHGSFEVIGETRDDAAGEAYDKVARTLSMPYPGGPHIDRLAHEGKPTIDLPRAWLEPDSYDFSFSGLKSAVINTVHNAKQRGIEIAPEDLAASFQESVIDVLVTKASRAADAYNVKQVLLAGGVAANKGLRARLETEFAQKENVELIIPPLSLCTDNAAMIAAAGTIAYEQGKRATLALNANPGLDIEA</sequence>